<organism>
    <name type="scientific">Salmonella choleraesuis (strain SC-B67)</name>
    <dbReference type="NCBI Taxonomy" id="321314"/>
    <lineage>
        <taxon>Bacteria</taxon>
        <taxon>Pseudomonadati</taxon>
        <taxon>Pseudomonadota</taxon>
        <taxon>Gammaproteobacteria</taxon>
        <taxon>Enterobacterales</taxon>
        <taxon>Enterobacteriaceae</taxon>
        <taxon>Salmonella</taxon>
    </lineage>
</organism>
<feature type="chain" id="PRO_1000046764" description="UPF0304 protein YfbU">
    <location>
        <begin position="1"/>
        <end position="164"/>
    </location>
</feature>
<protein>
    <recommendedName>
        <fullName evidence="1">UPF0304 protein YfbU</fullName>
    </recommendedName>
</protein>
<accession>Q57M20</accession>
<comment type="similarity">
    <text evidence="1">Belongs to the UPF0304 family.</text>
</comment>
<proteinExistence type="inferred from homology"/>
<evidence type="ECO:0000255" key="1">
    <source>
        <dbReference type="HAMAP-Rule" id="MF_00762"/>
    </source>
</evidence>
<sequence>MEMTNAQRLILSNQYKMMTMLDPTNAERYRRLQTIIERGYGLQMRELDREFGELTEETCRTIIDIMEMYHALHVSWANLKDTQAIDERRVTFLGFDAATEARYLGYVRFMVNIEGRYTHFDAGTHGFNAQTPMWEKYQRMLNVWHACPRQYHLSANEINQIINA</sequence>
<reference key="1">
    <citation type="journal article" date="2005" name="Nucleic Acids Res.">
        <title>The genome sequence of Salmonella enterica serovar Choleraesuis, a highly invasive and resistant zoonotic pathogen.</title>
        <authorList>
            <person name="Chiu C.-H."/>
            <person name="Tang P."/>
            <person name="Chu C."/>
            <person name="Hu S."/>
            <person name="Bao Q."/>
            <person name="Yu J."/>
            <person name="Chou Y.-Y."/>
            <person name="Wang H.-S."/>
            <person name="Lee Y.-S."/>
        </authorList>
    </citation>
    <scope>NUCLEOTIDE SEQUENCE [LARGE SCALE GENOMIC DNA]</scope>
    <source>
        <strain>SC-B67</strain>
    </source>
</reference>
<dbReference type="EMBL" id="AE017220">
    <property type="protein sequence ID" value="AAX66242.1"/>
    <property type="molecule type" value="Genomic_DNA"/>
</dbReference>
<dbReference type="RefSeq" id="WP_000426134.1">
    <property type="nucleotide sequence ID" value="NC_006905.1"/>
</dbReference>
<dbReference type="SMR" id="Q57M20"/>
<dbReference type="KEGG" id="sec:SCH_2336"/>
<dbReference type="HOGENOM" id="CLU_101021_1_0_6"/>
<dbReference type="Proteomes" id="UP000000538">
    <property type="component" value="Chromosome"/>
</dbReference>
<dbReference type="FunFam" id="1.10.3190.10:FF:000001">
    <property type="entry name" value="UPF0304 protein YfbU"/>
    <property type="match status" value="1"/>
</dbReference>
<dbReference type="Gene3D" id="1.10.287.680">
    <property type="entry name" value="Helix hairpin bin"/>
    <property type="match status" value="1"/>
</dbReference>
<dbReference type="Gene3D" id="1.10.3190.10">
    <property type="entry name" value="yfbu gene product, domain 2"/>
    <property type="match status" value="1"/>
</dbReference>
<dbReference type="HAMAP" id="MF_00762">
    <property type="entry name" value="UPF0304"/>
    <property type="match status" value="1"/>
</dbReference>
<dbReference type="InterPro" id="IPR005587">
    <property type="entry name" value="UPF0304_YfbU"/>
</dbReference>
<dbReference type="InterPro" id="IPR023146">
    <property type="entry name" value="YfbU_alpha-helical_sf"/>
</dbReference>
<dbReference type="InterPro" id="IPR023145">
    <property type="entry name" value="YfbU_helix-hairpin_sf"/>
</dbReference>
<dbReference type="NCBIfam" id="NF003936">
    <property type="entry name" value="PRK05445.1"/>
    <property type="match status" value="1"/>
</dbReference>
<dbReference type="Pfam" id="PF03887">
    <property type="entry name" value="YfbU"/>
    <property type="match status" value="1"/>
</dbReference>
<dbReference type="PIRSF" id="PIRSF006272">
    <property type="entry name" value="UCP006272"/>
    <property type="match status" value="1"/>
</dbReference>
<dbReference type="SUPFAM" id="SSF116960">
    <property type="entry name" value="YfbU-like"/>
    <property type="match status" value="1"/>
</dbReference>
<gene>
    <name evidence="1" type="primary">yfbU</name>
    <name type="ordered locus">SCH_2336</name>
</gene>
<name>YFBU_SALCH</name>